<evidence type="ECO:0000305" key="1"/>
<reference key="1">
    <citation type="journal article" date="2003" name="Proc. Natl. Acad. Sci. U.S.A.">
        <title>The complete genome sequence of Mycobacterium bovis.</title>
        <authorList>
            <person name="Garnier T."/>
            <person name="Eiglmeier K."/>
            <person name="Camus J.-C."/>
            <person name="Medina N."/>
            <person name="Mansoor H."/>
            <person name="Pryor M."/>
            <person name="Duthoy S."/>
            <person name="Grondin S."/>
            <person name="Lacroix C."/>
            <person name="Monsempe C."/>
            <person name="Simon S."/>
            <person name="Harris B."/>
            <person name="Atkin R."/>
            <person name="Doggett J."/>
            <person name="Mayes R."/>
            <person name="Keating L."/>
            <person name="Wheeler P.R."/>
            <person name="Parkhill J."/>
            <person name="Barrell B.G."/>
            <person name="Cole S.T."/>
            <person name="Gordon S.V."/>
            <person name="Hewinson R.G."/>
        </authorList>
    </citation>
    <scope>NUCLEOTIDE SEQUENCE [LARGE SCALE GENOMIC DNA]</scope>
    <source>
        <strain>ATCC BAA-935 / AF2122/97</strain>
    </source>
</reference>
<reference key="2">
    <citation type="journal article" date="2017" name="Genome Announc.">
        <title>Updated reference genome sequence and annotation of Mycobacterium bovis AF2122/97.</title>
        <authorList>
            <person name="Malone K.M."/>
            <person name="Farrell D."/>
            <person name="Stuber T.P."/>
            <person name="Schubert O.T."/>
            <person name="Aebersold R."/>
            <person name="Robbe-Austerman S."/>
            <person name="Gordon S.V."/>
        </authorList>
    </citation>
    <scope>NUCLEOTIDE SEQUENCE [LARGE SCALE GENOMIC DNA]</scope>
    <scope>GENOME REANNOTATION</scope>
    <source>
        <strain>ATCC BAA-935 / AF2122/97</strain>
    </source>
</reference>
<gene>
    <name type="primary">trpC</name>
    <name type="ordered locus">BQ2027_MB1637</name>
</gene>
<name>TRPC_MYCBO</name>
<comment type="catalytic activity">
    <reaction>
        <text>1-(2-carboxyphenylamino)-1-deoxy-D-ribulose 5-phosphate + H(+) = (1S,2R)-1-C-(indol-3-yl)glycerol 3-phosphate + CO2 + H2O</text>
        <dbReference type="Rhea" id="RHEA:23476"/>
        <dbReference type="ChEBI" id="CHEBI:15377"/>
        <dbReference type="ChEBI" id="CHEBI:15378"/>
        <dbReference type="ChEBI" id="CHEBI:16526"/>
        <dbReference type="ChEBI" id="CHEBI:58613"/>
        <dbReference type="ChEBI" id="CHEBI:58866"/>
        <dbReference type="EC" id="4.1.1.48"/>
    </reaction>
</comment>
<comment type="pathway">
    <text>Amino-acid biosynthesis; L-tryptophan biosynthesis; L-tryptophan from chorismate: step 4/5.</text>
</comment>
<comment type="similarity">
    <text evidence="1">Belongs to the TrpC family.</text>
</comment>
<proteinExistence type="inferred from homology"/>
<protein>
    <recommendedName>
        <fullName>Indole-3-glycerol phosphate synthase</fullName>
        <shortName>IGPS</shortName>
        <ecNumber>4.1.1.48</ecNumber>
    </recommendedName>
</protein>
<sequence length="272" mass="28023">MSPATVLDSILEGVRADVAAREASVSLSEIKAAAAAAPPPLDVMAALREPGIGVIAEVKRASPSAGALATIADPAKLAQAYQDGGARIVSVVTEQRRFQGSLDDLDAVRASVSIPVLRKDFVVQPYQIHEARAHGADMLLLIVAALEQSVLVSMLDRTESLGMTALVEVHTEQEADRALKAGAKVIGVNARDLMTLDVDRDCFARIAPGLPSSVIRIAESGVRGTADLLAYAGAGADAVLVGEGLVTSGDPRAAVADLVTAGTHPSCPKPAR</sequence>
<dbReference type="EC" id="4.1.1.48"/>
<dbReference type="EMBL" id="LT708304">
    <property type="protein sequence ID" value="SIU00241.1"/>
    <property type="molecule type" value="Genomic_DNA"/>
</dbReference>
<dbReference type="RefSeq" id="NP_855290.1">
    <property type="nucleotide sequence ID" value="NC_002945.3"/>
</dbReference>
<dbReference type="RefSeq" id="WP_003407990.1">
    <property type="nucleotide sequence ID" value="NC_002945.4"/>
</dbReference>
<dbReference type="SMR" id="P0A633"/>
<dbReference type="KEGG" id="mbo:BQ2027_MB1637"/>
<dbReference type="PATRIC" id="fig|233413.5.peg.1786"/>
<dbReference type="UniPathway" id="UPA00035">
    <property type="reaction ID" value="UER00043"/>
</dbReference>
<dbReference type="Proteomes" id="UP000001419">
    <property type="component" value="Chromosome"/>
</dbReference>
<dbReference type="GO" id="GO:0004425">
    <property type="term" value="F:indole-3-glycerol-phosphate synthase activity"/>
    <property type="evidence" value="ECO:0007669"/>
    <property type="project" value="UniProtKB-UniRule"/>
</dbReference>
<dbReference type="GO" id="GO:0004640">
    <property type="term" value="F:phosphoribosylanthranilate isomerase activity"/>
    <property type="evidence" value="ECO:0007669"/>
    <property type="project" value="TreeGrafter"/>
</dbReference>
<dbReference type="GO" id="GO:0000162">
    <property type="term" value="P:L-tryptophan biosynthetic process"/>
    <property type="evidence" value="ECO:0007669"/>
    <property type="project" value="UniProtKB-UniRule"/>
</dbReference>
<dbReference type="CDD" id="cd00331">
    <property type="entry name" value="IGPS"/>
    <property type="match status" value="1"/>
</dbReference>
<dbReference type="FunFam" id="3.20.20.70:FF:000024">
    <property type="entry name" value="Indole-3-glycerol phosphate synthase"/>
    <property type="match status" value="1"/>
</dbReference>
<dbReference type="Gene3D" id="3.20.20.70">
    <property type="entry name" value="Aldolase class I"/>
    <property type="match status" value="1"/>
</dbReference>
<dbReference type="HAMAP" id="MF_00134_B">
    <property type="entry name" value="IGPS_B"/>
    <property type="match status" value="1"/>
</dbReference>
<dbReference type="InterPro" id="IPR013785">
    <property type="entry name" value="Aldolase_TIM"/>
</dbReference>
<dbReference type="InterPro" id="IPR045186">
    <property type="entry name" value="Indole-3-glycerol_P_synth"/>
</dbReference>
<dbReference type="InterPro" id="IPR013798">
    <property type="entry name" value="Indole-3-glycerol_P_synth_dom"/>
</dbReference>
<dbReference type="InterPro" id="IPR001468">
    <property type="entry name" value="Indole-3-GlycerolPSynthase_CS"/>
</dbReference>
<dbReference type="InterPro" id="IPR011060">
    <property type="entry name" value="RibuloseP-bd_barrel"/>
</dbReference>
<dbReference type="NCBIfam" id="NF001369">
    <property type="entry name" value="PRK00278.1-1"/>
    <property type="match status" value="1"/>
</dbReference>
<dbReference type="NCBIfam" id="NF001377">
    <property type="entry name" value="PRK00278.2-4"/>
    <property type="match status" value="1"/>
</dbReference>
<dbReference type="PANTHER" id="PTHR22854:SF2">
    <property type="entry name" value="INDOLE-3-GLYCEROL-PHOSPHATE SYNTHASE"/>
    <property type="match status" value="1"/>
</dbReference>
<dbReference type="PANTHER" id="PTHR22854">
    <property type="entry name" value="TRYPTOPHAN BIOSYNTHESIS PROTEIN"/>
    <property type="match status" value="1"/>
</dbReference>
<dbReference type="Pfam" id="PF00218">
    <property type="entry name" value="IGPS"/>
    <property type="match status" value="1"/>
</dbReference>
<dbReference type="SUPFAM" id="SSF51366">
    <property type="entry name" value="Ribulose-phoshate binding barrel"/>
    <property type="match status" value="1"/>
</dbReference>
<dbReference type="PROSITE" id="PS00614">
    <property type="entry name" value="IGPS"/>
    <property type="match status" value="1"/>
</dbReference>
<feature type="chain" id="PRO_0000154235" description="Indole-3-glycerol phosphate synthase">
    <location>
        <begin position="1"/>
        <end position="272"/>
    </location>
</feature>
<accession>P0A633</accession>
<accession>A0A1R3XYS4</accession>
<accession>O06129</accession>
<accession>X2BIF5</accession>
<organism>
    <name type="scientific">Mycobacterium bovis (strain ATCC BAA-935 / AF2122/97)</name>
    <dbReference type="NCBI Taxonomy" id="233413"/>
    <lineage>
        <taxon>Bacteria</taxon>
        <taxon>Bacillati</taxon>
        <taxon>Actinomycetota</taxon>
        <taxon>Actinomycetes</taxon>
        <taxon>Mycobacteriales</taxon>
        <taxon>Mycobacteriaceae</taxon>
        <taxon>Mycobacterium</taxon>
        <taxon>Mycobacterium tuberculosis complex</taxon>
    </lineage>
</organism>
<keyword id="KW-0028">Amino-acid biosynthesis</keyword>
<keyword id="KW-0057">Aromatic amino acid biosynthesis</keyword>
<keyword id="KW-0210">Decarboxylase</keyword>
<keyword id="KW-0456">Lyase</keyword>
<keyword id="KW-1185">Reference proteome</keyword>
<keyword id="KW-0822">Tryptophan biosynthesis</keyword>